<keyword id="KW-0002">3D-structure</keyword>
<keyword id="KW-0378">Hydrolase</keyword>
<keyword id="KW-0464">Manganese</keyword>
<keyword id="KW-0479">Metal-binding</keyword>
<keyword id="KW-0533">Nickel</keyword>
<keyword id="KW-1185">Reference proteome</keyword>
<gene>
    <name type="ordered locus">MJ0936</name>
</gene>
<sequence>MKIGIMSDTHDHLPNIRKAIEIFNDENVETVIHCGDFVSLFVIKEFENLNANIIATYGNNDGERCKLKEWLKDINEENIIDDFISVEIDDLKFFITHGHHQSVLEMAIKSGLYDVVIYGHTHERVFEEVDDVLVINPGECCGYLTGIPTIGILDTEKKEYREIVLE</sequence>
<dbReference type="EC" id="3.1.4.-" evidence="3"/>
<dbReference type="EMBL" id="L77117">
    <property type="protein sequence ID" value="AAB98941.1"/>
    <property type="molecule type" value="Genomic_DNA"/>
</dbReference>
<dbReference type="PIR" id="H64416">
    <property type="entry name" value="H64416"/>
</dbReference>
<dbReference type="RefSeq" id="WP_010870450.1">
    <property type="nucleotide sequence ID" value="NC_000909.1"/>
</dbReference>
<dbReference type="PDB" id="1S3L">
    <property type="method" value="X-ray"/>
    <property type="resolution" value="2.40 A"/>
    <property type="chains" value="A/B=1-165"/>
</dbReference>
<dbReference type="PDB" id="1S3M">
    <property type="method" value="X-ray"/>
    <property type="resolution" value="2.50 A"/>
    <property type="chains" value="A/B=1-165"/>
</dbReference>
<dbReference type="PDB" id="1S3N">
    <property type="method" value="X-ray"/>
    <property type="resolution" value="2.50 A"/>
    <property type="chains" value="A/B=1-165"/>
</dbReference>
<dbReference type="PDB" id="2AHD">
    <property type="method" value="X-ray"/>
    <property type="resolution" value="3.00 A"/>
    <property type="chains" value="A/B/C/D=1-165"/>
</dbReference>
<dbReference type="PDBsum" id="1S3L"/>
<dbReference type="PDBsum" id="1S3M"/>
<dbReference type="PDBsum" id="1S3N"/>
<dbReference type="PDBsum" id="2AHD"/>
<dbReference type="SMR" id="Q58346"/>
<dbReference type="STRING" id="243232.MJ_0936"/>
<dbReference type="PaxDb" id="243232-MJ_0936"/>
<dbReference type="EnsemblBacteria" id="AAB98941">
    <property type="protein sequence ID" value="AAB98941"/>
    <property type="gene ID" value="MJ_0936"/>
</dbReference>
<dbReference type="GeneID" id="1451832"/>
<dbReference type="KEGG" id="mja:MJ_0936"/>
<dbReference type="eggNOG" id="arCOG01141">
    <property type="taxonomic scope" value="Archaea"/>
</dbReference>
<dbReference type="HOGENOM" id="CLU_063749_4_0_2"/>
<dbReference type="InParanoid" id="Q58346"/>
<dbReference type="OrthoDB" id="9959at2157"/>
<dbReference type="PhylomeDB" id="Q58346"/>
<dbReference type="BRENDA" id="3.1.4.1">
    <property type="organism ID" value="3260"/>
</dbReference>
<dbReference type="SABIO-RK" id="Q58346"/>
<dbReference type="EvolutionaryTrace" id="Q58346"/>
<dbReference type="Proteomes" id="UP000000805">
    <property type="component" value="Chromosome"/>
</dbReference>
<dbReference type="GO" id="GO:0016787">
    <property type="term" value="F:hydrolase activity"/>
    <property type="evidence" value="ECO:0007669"/>
    <property type="project" value="UniProtKB-KW"/>
</dbReference>
<dbReference type="GO" id="GO:0046872">
    <property type="term" value="F:metal ion binding"/>
    <property type="evidence" value="ECO:0007669"/>
    <property type="project" value="UniProtKB-KW"/>
</dbReference>
<dbReference type="CDD" id="cd00841">
    <property type="entry name" value="MPP_YfcE"/>
    <property type="match status" value="1"/>
</dbReference>
<dbReference type="Gene3D" id="3.60.21.10">
    <property type="match status" value="1"/>
</dbReference>
<dbReference type="InterPro" id="IPR024654">
    <property type="entry name" value="Calcineurin-like_PHP_lpxH"/>
</dbReference>
<dbReference type="InterPro" id="IPR029052">
    <property type="entry name" value="Metallo-depent_PP-like"/>
</dbReference>
<dbReference type="InterPro" id="IPR053193">
    <property type="entry name" value="MetalloPDE_YfcE-like"/>
</dbReference>
<dbReference type="InterPro" id="IPR041802">
    <property type="entry name" value="MPP_YfcE"/>
</dbReference>
<dbReference type="InterPro" id="IPR020935">
    <property type="entry name" value="PdiEstase_YfcE_CS"/>
</dbReference>
<dbReference type="InterPro" id="IPR000979">
    <property type="entry name" value="Phosphodiesterase_MJ0936/Vps29"/>
</dbReference>
<dbReference type="NCBIfam" id="TIGR00040">
    <property type="entry name" value="yfcE"/>
    <property type="match status" value="1"/>
</dbReference>
<dbReference type="PANTHER" id="PTHR43165">
    <property type="entry name" value="METALLOPHOSPHOESTERASE"/>
    <property type="match status" value="1"/>
</dbReference>
<dbReference type="PANTHER" id="PTHR43165:SF1">
    <property type="entry name" value="PHOSPHODIESTERASE MJ0936"/>
    <property type="match status" value="1"/>
</dbReference>
<dbReference type="Pfam" id="PF12850">
    <property type="entry name" value="Metallophos_2"/>
    <property type="match status" value="1"/>
</dbReference>
<dbReference type="SUPFAM" id="SSF56300">
    <property type="entry name" value="Metallo-dependent phosphatases"/>
    <property type="match status" value="1"/>
</dbReference>
<dbReference type="PROSITE" id="PS01269">
    <property type="entry name" value="UPF0025"/>
    <property type="match status" value="1"/>
</dbReference>
<comment type="function">
    <text evidence="1">Shows phosphodiesterase activity (PubMed:15128743). Hydrolyzes phosphodiesters bonds in the artificial chromogenic substrates bis-p-nitrophenyl phosphate (bis-pNPP), and less efficiently thymidine 5'-monophosphate p-nitrophenyl ester (pNP-TMP) and p-nitrophenylphosphorylcholine (pNPPC) (PubMed:15128743). No catalytic activity was found toward cAMP or cGMP, nucleotides or phospholipase substrates such as phosphatidylcholine (PubMed:15128743). The physiological substrate is unknown (PubMed:15128743).</text>
</comment>
<comment type="cofactor">
    <cofactor evidence="1">
        <name>Ni(2+)</name>
        <dbReference type="ChEBI" id="CHEBI:49786"/>
    </cofactor>
    <cofactor evidence="1">
        <name>Mn(2+)</name>
        <dbReference type="ChEBI" id="CHEBI:29035"/>
    </cofactor>
    <text evidence="1">Binds 2 divalent metal ions per subunit. Most effective are nickel and manganese.</text>
</comment>
<comment type="activity regulation">
    <text>Competitively inhibited by phosphate.</text>
</comment>
<comment type="biophysicochemical properties">
    <kinetics>
        <KM evidence="1">0.15 mM for bis-pNPP (in the presence of Ni(2+))</KM>
        <KM evidence="1">0.035 mM for pNP-TMP (in the presence of Ni(2+))</KM>
        <KM evidence="1">3.33 mM for pNPPC (in the presence of Ni(2+))</KM>
        <KM evidence="1">1.53 mM for pNPPC (in the presence of Mn(2+))</KM>
    </kinetics>
    <phDependence>
        <text evidence="1">Optimum pH is 9.4-9.8.</text>
    </phDependence>
</comment>
<comment type="subunit">
    <text evidence="2">Monomer.</text>
</comment>
<comment type="similarity">
    <text evidence="2">Belongs to the metallophosphoesterase superfamily. YfcE family.</text>
</comment>
<feature type="chain" id="PRO_0000155612" description="Phosphodiesterase MJ0936">
    <location>
        <begin position="1"/>
        <end position="166"/>
    </location>
</feature>
<feature type="binding site" evidence="1 6">
    <location>
        <position position="8"/>
    </location>
    <ligand>
        <name>Mn(2+)</name>
        <dbReference type="ChEBI" id="CHEBI:29035"/>
        <label>1</label>
    </ligand>
</feature>
<feature type="binding site" evidence="1 5">
    <location>
        <position position="8"/>
    </location>
    <ligand>
        <name>Ni(2+)</name>
        <dbReference type="ChEBI" id="CHEBI:49786"/>
        <label>1</label>
    </ligand>
</feature>
<feature type="binding site" evidence="1 6">
    <location>
        <position position="10"/>
    </location>
    <ligand>
        <name>Mn(2+)</name>
        <dbReference type="ChEBI" id="CHEBI:29035"/>
        <label>1</label>
    </ligand>
</feature>
<feature type="binding site" evidence="1 5">
    <location>
        <position position="10"/>
    </location>
    <ligand>
        <name>Ni(2+)</name>
        <dbReference type="ChEBI" id="CHEBI:49786"/>
        <label>1</label>
    </ligand>
</feature>
<feature type="binding site" evidence="1 6">
    <location>
        <position position="36"/>
    </location>
    <ligand>
        <name>Mn(2+)</name>
        <dbReference type="ChEBI" id="CHEBI:29035"/>
        <label>1</label>
    </ligand>
</feature>
<feature type="binding site" evidence="1 6">
    <location>
        <position position="36"/>
    </location>
    <ligand>
        <name>Mn(2+)</name>
        <dbReference type="ChEBI" id="CHEBI:29035"/>
        <label>2</label>
    </ligand>
</feature>
<feature type="binding site" evidence="1 5">
    <location>
        <position position="36"/>
    </location>
    <ligand>
        <name>Ni(2+)</name>
        <dbReference type="ChEBI" id="CHEBI:49786"/>
        <label>1</label>
    </ligand>
</feature>
<feature type="binding site" evidence="1 5">
    <location>
        <position position="36"/>
    </location>
    <ligand>
        <name>Ni(2+)</name>
        <dbReference type="ChEBI" id="CHEBI:49786"/>
        <label>2</label>
    </ligand>
</feature>
<feature type="binding site" evidence="1 6">
    <location>
        <position position="59"/>
    </location>
    <ligand>
        <name>Mn(2+)</name>
        <dbReference type="ChEBI" id="CHEBI:29035"/>
        <label>2</label>
    </ligand>
</feature>
<feature type="binding site" evidence="1 5">
    <location>
        <position position="59"/>
    </location>
    <ligand>
        <name>Ni(2+)</name>
        <dbReference type="ChEBI" id="CHEBI:49786"/>
        <label>2</label>
    </ligand>
</feature>
<feature type="binding site" evidence="1 6">
    <location>
        <position position="97"/>
    </location>
    <ligand>
        <name>Mn(2+)</name>
        <dbReference type="ChEBI" id="CHEBI:29035"/>
        <label>2</label>
    </ligand>
</feature>
<feature type="binding site" evidence="1 5">
    <location>
        <position position="97"/>
    </location>
    <ligand>
        <name>Ni(2+)</name>
        <dbReference type="ChEBI" id="CHEBI:49786"/>
        <label>2</label>
    </ligand>
</feature>
<feature type="binding site" evidence="1 6">
    <location>
        <position position="120"/>
    </location>
    <ligand>
        <name>Mn(2+)</name>
        <dbReference type="ChEBI" id="CHEBI:29035"/>
        <label>2</label>
    </ligand>
</feature>
<feature type="binding site" evidence="1 5">
    <location>
        <position position="120"/>
    </location>
    <ligand>
        <name>Ni(2+)</name>
        <dbReference type="ChEBI" id="CHEBI:49786"/>
        <label>2</label>
    </ligand>
</feature>
<feature type="binding site" evidence="1 6">
    <location>
        <position position="122"/>
    </location>
    <ligand>
        <name>Mn(2+)</name>
        <dbReference type="ChEBI" id="CHEBI:29035"/>
        <label>1</label>
    </ligand>
</feature>
<feature type="binding site" evidence="1 5">
    <location>
        <position position="122"/>
    </location>
    <ligand>
        <name>Ni(2+)</name>
        <dbReference type="ChEBI" id="CHEBI:49786"/>
        <label>1</label>
    </ligand>
</feature>
<feature type="strand" evidence="7">
    <location>
        <begin position="2"/>
        <end position="6"/>
    </location>
</feature>
<feature type="helix" evidence="7">
    <location>
        <begin position="13"/>
        <end position="25"/>
    </location>
</feature>
<feature type="strand" evidence="7">
    <location>
        <begin position="29"/>
        <end position="33"/>
    </location>
</feature>
<feature type="helix" evidence="7">
    <location>
        <begin position="41"/>
        <end position="45"/>
    </location>
</feature>
<feature type="helix" evidence="7">
    <location>
        <begin position="46"/>
        <end position="48"/>
    </location>
</feature>
<feature type="strand" evidence="7">
    <location>
        <begin position="50"/>
        <end position="56"/>
    </location>
</feature>
<feature type="helix" evidence="7">
    <location>
        <begin position="64"/>
        <end position="74"/>
    </location>
</feature>
<feature type="strand" evidence="7">
    <location>
        <begin position="79"/>
        <end position="88"/>
    </location>
</feature>
<feature type="strand" evidence="7">
    <location>
        <begin position="91"/>
        <end position="98"/>
    </location>
</feature>
<feature type="helix" evidence="7">
    <location>
        <begin position="101"/>
        <end position="110"/>
    </location>
</feature>
<feature type="strand" evidence="7">
    <location>
        <begin position="114"/>
        <end position="119"/>
    </location>
</feature>
<feature type="strand" evidence="7">
    <location>
        <begin position="125"/>
        <end position="129"/>
    </location>
</feature>
<feature type="strand" evidence="7">
    <location>
        <begin position="132"/>
        <end position="136"/>
    </location>
</feature>
<feature type="turn" evidence="7">
    <location>
        <begin position="143"/>
        <end position="145"/>
    </location>
</feature>
<feature type="strand" evidence="7">
    <location>
        <begin position="149"/>
        <end position="154"/>
    </location>
</feature>
<feature type="turn" evidence="7">
    <location>
        <begin position="155"/>
        <end position="158"/>
    </location>
</feature>
<feature type="strand" evidence="7">
    <location>
        <begin position="159"/>
        <end position="164"/>
    </location>
</feature>
<accession>Q58346</accession>
<proteinExistence type="evidence at protein level"/>
<organism>
    <name type="scientific">Methanocaldococcus jannaschii (strain ATCC 43067 / DSM 2661 / JAL-1 / JCM 10045 / NBRC 100440)</name>
    <name type="common">Methanococcus jannaschii</name>
    <dbReference type="NCBI Taxonomy" id="243232"/>
    <lineage>
        <taxon>Archaea</taxon>
        <taxon>Methanobacteriati</taxon>
        <taxon>Methanobacteriota</taxon>
        <taxon>Methanomada group</taxon>
        <taxon>Methanococci</taxon>
        <taxon>Methanococcales</taxon>
        <taxon>Methanocaldococcaceae</taxon>
        <taxon>Methanocaldococcus</taxon>
    </lineage>
</organism>
<protein>
    <recommendedName>
        <fullName evidence="2">Phosphodiesterase MJ0936</fullName>
        <ecNumber evidence="3">3.1.4.-</ecNumber>
    </recommendedName>
</protein>
<name>P936_METJA</name>
<evidence type="ECO:0000269" key="1">
    <source>
    </source>
</evidence>
<evidence type="ECO:0000305" key="2"/>
<evidence type="ECO:0000305" key="3">
    <source>
    </source>
</evidence>
<evidence type="ECO:0007744" key="4">
    <source>
        <dbReference type="PDB" id="1S3L"/>
    </source>
</evidence>
<evidence type="ECO:0007744" key="5">
    <source>
        <dbReference type="PDB" id="1S3M"/>
    </source>
</evidence>
<evidence type="ECO:0007744" key="6">
    <source>
        <dbReference type="PDB" id="1S3N"/>
    </source>
</evidence>
<evidence type="ECO:0007829" key="7">
    <source>
        <dbReference type="PDB" id="1S3L"/>
    </source>
</evidence>
<reference key="1">
    <citation type="journal article" date="1996" name="Science">
        <title>Complete genome sequence of the methanogenic archaeon, Methanococcus jannaschii.</title>
        <authorList>
            <person name="Bult C.J."/>
            <person name="White O."/>
            <person name="Olsen G.J."/>
            <person name="Zhou L."/>
            <person name="Fleischmann R.D."/>
            <person name="Sutton G.G."/>
            <person name="Blake J.A."/>
            <person name="FitzGerald L.M."/>
            <person name="Clayton R.A."/>
            <person name="Gocayne J.D."/>
            <person name="Kerlavage A.R."/>
            <person name="Dougherty B.A."/>
            <person name="Tomb J.-F."/>
            <person name="Adams M.D."/>
            <person name="Reich C.I."/>
            <person name="Overbeek R."/>
            <person name="Kirkness E.F."/>
            <person name="Weinstock K.G."/>
            <person name="Merrick J.M."/>
            <person name="Glodek A."/>
            <person name="Scott J.L."/>
            <person name="Geoghagen N.S.M."/>
            <person name="Weidman J.F."/>
            <person name="Fuhrmann J.L."/>
            <person name="Nguyen D."/>
            <person name="Utterback T.R."/>
            <person name="Kelley J.M."/>
            <person name="Peterson J.D."/>
            <person name="Sadow P.W."/>
            <person name="Hanna M.C."/>
            <person name="Cotton M.D."/>
            <person name="Roberts K.M."/>
            <person name="Hurst M.A."/>
            <person name="Kaine B.P."/>
            <person name="Borodovsky M."/>
            <person name="Klenk H.-P."/>
            <person name="Fraser C.M."/>
            <person name="Smith H.O."/>
            <person name="Woese C.R."/>
            <person name="Venter J.C."/>
        </authorList>
    </citation>
    <scope>NUCLEOTIDE SEQUENCE [LARGE SCALE GENOMIC DNA]</scope>
    <source>
        <strain>ATCC 43067 / DSM 2661 / JAL-1 / JCM 10045 / NBRC 100440</strain>
    </source>
</reference>
<reference evidence="4 5 6" key="2">
    <citation type="journal article" date="2004" name="J. Biol. Chem.">
        <title>Structural and functional characterization of a novel phosphodiesterase from Methanococcus jannaschii.</title>
        <authorList>
            <person name="Chen S."/>
            <person name="Yakunin A.F."/>
            <person name="Kuznetsova E."/>
            <person name="Busso D."/>
            <person name="Pufan R."/>
            <person name="Proudfoot M."/>
            <person name="Kim R."/>
            <person name="Kim S.-H."/>
        </authorList>
    </citation>
    <scope>X-RAY CRYSTALLOGRAPHY (2.4 ANGSTROMS) OF 1-165 OF NATIVE PROTEIN AND IN COMPLEXES WITH NICKEL AND MANGANESE</scope>
    <scope>FUNCTION</scope>
    <scope>COFACTOR</scope>
    <scope>BIOPHYSICOCHEMICAL PROPERTIES</scope>
    <source>
        <strain>ATCC 43067 / DSM 2661 / JAL-1 / JCM 10045 / NBRC 100440</strain>
    </source>
</reference>